<accession>A7X383</accession>
<feature type="chain" id="PRO_1000022176" description="Valine--tRNA ligase">
    <location>
        <begin position="1"/>
        <end position="876"/>
    </location>
</feature>
<feature type="coiled-coil region" evidence="1">
    <location>
        <begin position="805"/>
        <end position="876"/>
    </location>
</feature>
<feature type="short sequence motif" description="'HIGH' region">
    <location>
        <begin position="44"/>
        <end position="54"/>
    </location>
</feature>
<feature type="short sequence motif" description="'KMSKS' region">
    <location>
        <begin position="520"/>
        <end position="524"/>
    </location>
</feature>
<feature type="binding site" evidence="1">
    <location>
        <position position="523"/>
    </location>
    <ligand>
        <name>ATP</name>
        <dbReference type="ChEBI" id="CHEBI:30616"/>
    </ligand>
</feature>
<dbReference type="EC" id="6.1.1.9" evidence="1"/>
<dbReference type="EMBL" id="AP009324">
    <property type="protein sequence ID" value="BAF78533.1"/>
    <property type="molecule type" value="Genomic_DNA"/>
</dbReference>
<dbReference type="RefSeq" id="WP_000425350.1">
    <property type="nucleotide sequence ID" value="NC_009782.1"/>
</dbReference>
<dbReference type="SMR" id="A7X383"/>
<dbReference type="KEGG" id="saw:SAHV_1650"/>
<dbReference type="HOGENOM" id="CLU_001493_0_2_9"/>
<dbReference type="GO" id="GO:0005829">
    <property type="term" value="C:cytosol"/>
    <property type="evidence" value="ECO:0007669"/>
    <property type="project" value="TreeGrafter"/>
</dbReference>
<dbReference type="GO" id="GO:0002161">
    <property type="term" value="F:aminoacyl-tRNA deacylase activity"/>
    <property type="evidence" value="ECO:0007669"/>
    <property type="project" value="InterPro"/>
</dbReference>
<dbReference type="GO" id="GO:0005524">
    <property type="term" value="F:ATP binding"/>
    <property type="evidence" value="ECO:0007669"/>
    <property type="project" value="UniProtKB-UniRule"/>
</dbReference>
<dbReference type="GO" id="GO:0004832">
    <property type="term" value="F:valine-tRNA ligase activity"/>
    <property type="evidence" value="ECO:0007669"/>
    <property type="project" value="UniProtKB-UniRule"/>
</dbReference>
<dbReference type="GO" id="GO:0006438">
    <property type="term" value="P:valyl-tRNA aminoacylation"/>
    <property type="evidence" value="ECO:0007669"/>
    <property type="project" value="UniProtKB-UniRule"/>
</dbReference>
<dbReference type="CDD" id="cd07962">
    <property type="entry name" value="Anticodon_Ia_Val"/>
    <property type="match status" value="1"/>
</dbReference>
<dbReference type="CDD" id="cd00817">
    <property type="entry name" value="ValRS_core"/>
    <property type="match status" value="1"/>
</dbReference>
<dbReference type="FunFam" id="1.10.287.380:FF:000001">
    <property type="entry name" value="Valine--tRNA ligase"/>
    <property type="match status" value="1"/>
</dbReference>
<dbReference type="FunFam" id="1.10.730.10:FF:000014">
    <property type="entry name" value="Valine--tRNA ligase"/>
    <property type="match status" value="1"/>
</dbReference>
<dbReference type="FunFam" id="3.40.50.620:FF:000032">
    <property type="entry name" value="Valine--tRNA ligase"/>
    <property type="match status" value="1"/>
</dbReference>
<dbReference type="FunFam" id="3.40.50.620:FF:000098">
    <property type="entry name" value="Valine--tRNA ligase"/>
    <property type="match status" value="1"/>
</dbReference>
<dbReference type="FunFam" id="3.90.740.10:FF:000005">
    <property type="entry name" value="Valine--tRNA ligase, mitochondrial"/>
    <property type="match status" value="1"/>
</dbReference>
<dbReference type="Gene3D" id="3.40.50.620">
    <property type="entry name" value="HUPs"/>
    <property type="match status" value="2"/>
</dbReference>
<dbReference type="Gene3D" id="1.10.730.10">
    <property type="entry name" value="Isoleucyl-tRNA Synthetase, Domain 1"/>
    <property type="match status" value="1"/>
</dbReference>
<dbReference type="Gene3D" id="1.10.287.380">
    <property type="entry name" value="Valyl-tRNA synthetase, C-terminal domain"/>
    <property type="match status" value="1"/>
</dbReference>
<dbReference type="Gene3D" id="3.90.740.10">
    <property type="entry name" value="Valyl/Leucyl/Isoleucyl-tRNA synthetase, editing domain"/>
    <property type="match status" value="1"/>
</dbReference>
<dbReference type="HAMAP" id="MF_02004">
    <property type="entry name" value="Val_tRNA_synth_type1"/>
    <property type="match status" value="1"/>
</dbReference>
<dbReference type="InterPro" id="IPR001412">
    <property type="entry name" value="aa-tRNA-synth_I_CS"/>
</dbReference>
<dbReference type="InterPro" id="IPR002300">
    <property type="entry name" value="aa-tRNA-synth_Ia"/>
</dbReference>
<dbReference type="InterPro" id="IPR033705">
    <property type="entry name" value="Anticodon_Ia_Val"/>
</dbReference>
<dbReference type="InterPro" id="IPR013155">
    <property type="entry name" value="M/V/L/I-tRNA-synth_anticd-bd"/>
</dbReference>
<dbReference type="InterPro" id="IPR014729">
    <property type="entry name" value="Rossmann-like_a/b/a_fold"/>
</dbReference>
<dbReference type="InterPro" id="IPR010978">
    <property type="entry name" value="tRNA-bd_arm"/>
</dbReference>
<dbReference type="InterPro" id="IPR009080">
    <property type="entry name" value="tRNAsynth_Ia_anticodon-bd"/>
</dbReference>
<dbReference type="InterPro" id="IPR037118">
    <property type="entry name" value="Val-tRNA_synth_C_sf"/>
</dbReference>
<dbReference type="InterPro" id="IPR019499">
    <property type="entry name" value="Val-tRNA_synth_tRNA-bd"/>
</dbReference>
<dbReference type="InterPro" id="IPR009008">
    <property type="entry name" value="Val/Leu/Ile-tRNA-synth_edit"/>
</dbReference>
<dbReference type="InterPro" id="IPR002303">
    <property type="entry name" value="Valyl-tRNA_ligase"/>
</dbReference>
<dbReference type="NCBIfam" id="NF004349">
    <property type="entry name" value="PRK05729.1"/>
    <property type="match status" value="1"/>
</dbReference>
<dbReference type="NCBIfam" id="TIGR00422">
    <property type="entry name" value="valS"/>
    <property type="match status" value="1"/>
</dbReference>
<dbReference type="PANTHER" id="PTHR11946:SF93">
    <property type="entry name" value="VALINE--TRNA LIGASE, CHLOROPLASTIC_MITOCHONDRIAL 2"/>
    <property type="match status" value="1"/>
</dbReference>
<dbReference type="PANTHER" id="PTHR11946">
    <property type="entry name" value="VALYL-TRNA SYNTHETASES"/>
    <property type="match status" value="1"/>
</dbReference>
<dbReference type="Pfam" id="PF08264">
    <property type="entry name" value="Anticodon_1"/>
    <property type="match status" value="1"/>
</dbReference>
<dbReference type="Pfam" id="PF00133">
    <property type="entry name" value="tRNA-synt_1"/>
    <property type="match status" value="1"/>
</dbReference>
<dbReference type="Pfam" id="PF10458">
    <property type="entry name" value="Val_tRNA-synt_C"/>
    <property type="match status" value="1"/>
</dbReference>
<dbReference type="PRINTS" id="PR00986">
    <property type="entry name" value="TRNASYNTHVAL"/>
</dbReference>
<dbReference type="SUPFAM" id="SSF47323">
    <property type="entry name" value="Anticodon-binding domain of a subclass of class I aminoacyl-tRNA synthetases"/>
    <property type="match status" value="1"/>
</dbReference>
<dbReference type="SUPFAM" id="SSF52374">
    <property type="entry name" value="Nucleotidylyl transferase"/>
    <property type="match status" value="1"/>
</dbReference>
<dbReference type="SUPFAM" id="SSF46589">
    <property type="entry name" value="tRNA-binding arm"/>
    <property type="match status" value="1"/>
</dbReference>
<dbReference type="SUPFAM" id="SSF50677">
    <property type="entry name" value="ValRS/IleRS/LeuRS editing domain"/>
    <property type="match status" value="1"/>
</dbReference>
<dbReference type="PROSITE" id="PS00178">
    <property type="entry name" value="AA_TRNA_LIGASE_I"/>
    <property type="match status" value="1"/>
</dbReference>
<evidence type="ECO:0000255" key="1">
    <source>
        <dbReference type="HAMAP-Rule" id="MF_02004"/>
    </source>
</evidence>
<reference key="1">
    <citation type="journal article" date="2008" name="Antimicrob. Agents Chemother.">
        <title>Mutated response regulator graR is responsible for phenotypic conversion of Staphylococcus aureus from heterogeneous vancomycin-intermediate resistance to vancomycin-intermediate resistance.</title>
        <authorList>
            <person name="Neoh H.-M."/>
            <person name="Cui L."/>
            <person name="Yuzawa H."/>
            <person name="Takeuchi F."/>
            <person name="Matsuo M."/>
            <person name="Hiramatsu K."/>
        </authorList>
    </citation>
    <scope>NUCLEOTIDE SEQUENCE [LARGE SCALE GENOMIC DNA]</scope>
    <source>
        <strain>Mu3 / ATCC 700698</strain>
    </source>
</reference>
<keyword id="KW-0030">Aminoacyl-tRNA synthetase</keyword>
<keyword id="KW-0067">ATP-binding</keyword>
<keyword id="KW-0175">Coiled coil</keyword>
<keyword id="KW-0963">Cytoplasm</keyword>
<keyword id="KW-0436">Ligase</keyword>
<keyword id="KW-0547">Nucleotide-binding</keyword>
<keyword id="KW-0648">Protein biosynthesis</keyword>
<proteinExistence type="inferred from homology"/>
<name>SYV_STAA1</name>
<protein>
    <recommendedName>
        <fullName evidence="1">Valine--tRNA ligase</fullName>
        <ecNumber evidence="1">6.1.1.9</ecNumber>
    </recommendedName>
    <alternativeName>
        <fullName evidence="1">Valyl-tRNA synthetase</fullName>
        <shortName evidence="1">ValRS</shortName>
    </alternativeName>
</protein>
<organism>
    <name type="scientific">Staphylococcus aureus (strain Mu3 / ATCC 700698)</name>
    <dbReference type="NCBI Taxonomy" id="418127"/>
    <lineage>
        <taxon>Bacteria</taxon>
        <taxon>Bacillati</taxon>
        <taxon>Bacillota</taxon>
        <taxon>Bacilli</taxon>
        <taxon>Bacillales</taxon>
        <taxon>Staphylococcaceae</taxon>
        <taxon>Staphylococcus</taxon>
    </lineage>
</organism>
<comment type="function">
    <text evidence="1">Catalyzes the attachment of valine to tRNA(Val). As ValRS can inadvertently accommodate and process structurally similar amino acids such as threonine, to avoid such errors, it has a 'posttransfer' editing activity that hydrolyzes mischarged Thr-tRNA(Val) in a tRNA-dependent manner.</text>
</comment>
<comment type="catalytic activity">
    <reaction evidence="1">
        <text>tRNA(Val) + L-valine + ATP = L-valyl-tRNA(Val) + AMP + diphosphate</text>
        <dbReference type="Rhea" id="RHEA:10704"/>
        <dbReference type="Rhea" id="RHEA-COMP:9672"/>
        <dbReference type="Rhea" id="RHEA-COMP:9708"/>
        <dbReference type="ChEBI" id="CHEBI:30616"/>
        <dbReference type="ChEBI" id="CHEBI:33019"/>
        <dbReference type="ChEBI" id="CHEBI:57762"/>
        <dbReference type="ChEBI" id="CHEBI:78442"/>
        <dbReference type="ChEBI" id="CHEBI:78537"/>
        <dbReference type="ChEBI" id="CHEBI:456215"/>
        <dbReference type="EC" id="6.1.1.9"/>
    </reaction>
</comment>
<comment type="subunit">
    <text evidence="1">Monomer.</text>
</comment>
<comment type="subcellular location">
    <subcellularLocation>
        <location evidence="1">Cytoplasm</location>
    </subcellularLocation>
</comment>
<comment type="domain">
    <text evidence="1">ValRS has two distinct active sites: one for aminoacylation and one for editing. The misactivated threonine is translocated from the active site to the editing site.</text>
</comment>
<comment type="domain">
    <text evidence="1">The C-terminal coiled-coil domain is crucial for aminoacylation activity.</text>
</comment>
<comment type="similarity">
    <text evidence="1">Belongs to the class-I aminoacyl-tRNA synthetase family. ValS type 1 subfamily.</text>
</comment>
<sequence>MEMKPKYDPREVEAGRYEEWVKNGYFKPSEDKSKETYTIVIPPPNVTGKLHLGHAWDTTLQDIITRMKRMQGYDTLYLPGMDHAGIATQAKVEAKLNEQGITRYDLGREKFLEQAWDWKEEYASFIRAQWAKLGLGLDYSRERFTLDEGLSKAVKKVFVDLYNKGIIYRGERIINWDPKARTALSDIEVIHEDVQGAFYHFKYPYADGEGFIEIATTRPETMLGDTAIVVNPNDERYKDVIGKTVILPIVGRELPILADEYVDIDFGSGAMKVTPAHDPNDFEIGQRHQLENIIVMDENGKMNDKAGKYEGMDRFDCRKQLVKDLKEQDLVIKIEDHFHSVGHSERSGAVVEPYLSTQWFVRMEDLAKRSLDNQKTDDRIDFYPQRFEHTFNQWMENIRDWTISRQLWWGHQIPAWYHKETGEIYVGEEAPTDIENWQQDEDVLDTWFSSALWPFSTLGWPDLESEDFKRYYPTNALVTGYDIIFFWVARMIFQGLEFTDRRPFNDVLLHGLVRAEDGRKMSKSLGNGVDPMDVIDEYGADSLRYFLATGSSPGHDLRYSTEKVESVWNFINKIWNGARFSLMNIGEDFKVEDIDLSGNLSLADKWILTRLNETIATVTDLSDKYEFGEVGRALYNFIWDDFCDWYIEMSKIPMNSNDEEQKQVTRSVLSYTLDNIMRMLHPFMPFVTEKIWQSLPHEGDTIVKASWPEVRESLIFEESKQTMQQLVEIIKSVRQSRVEVNTPLSKEIPILIQAKDKEIETTLSQNKDYLIKFCNPSTLNISTDVEIPEKAMTSVVIAGKVVLPLEGLIDMDKEISRLEKELAKLQSELDRVDKKLSNENFVSKAPEKVINEEKRKKQDYQEKYDGVKARIEQLKA</sequence>
<gene>
    <name evidence="1" type="primary">valS</name>
    <name type="ordered locus">SAHV_1650</name>
</gene>